<name>GPDA_BURM1</name>
<sequence>MKVAVLGAGAWGTALAGHLAARHDTLLWARDAALIAGLQARHENSRYLDGIALPDALRYDAELGAALAHGAADDALCVIAAPVAGLRTLCRAMRDAGCVPAHIVWVCKGFEADTHLLPHQVIAAELPEQLSNGVLSGPSFAREVGQGLPVALTVASVSAACRDRTLAAFHHGAMRIYTGDDVIGVEVGGAVKNVLAIATGIADGLGLGLNARAALITRGLAEMSRLGAALGGRTETFTGLTGLGDLILTATGDLSRNRTVGLQLAAGRSLNDILGALGHVAEGVRCAQAVLALARAQSIEMPITEAVCGVLFDGVAPRDAVSGLLRRDARAE</sequence>
<gene>
    <name evidence="1" type="primary">gpsA</name>
    <name type="ordered locus">Bmul_0450</name>
    <name type="ordered locus">BMULJ_02805</name>
</gene>
<feature type="chain" id="PRO_1000123127" description="Glycerol-3-phosphate dehydrogenase [NAD(P)+]">
    <location>
        <begin position="1"/>
        <end position="332"/>
    </location>
</feature>
<feature type="active site" description="Proton acceptor" evidence="1">
    <location>
        <position position="192"/>
    </location>
</feature>
<feature type="binding site" evidence="1">
    <location>
        <position position="11"/>
    </location>
    <ligand>
        <name>NADPH</name>
        <dbReference type="ChEBI" id="CHEBI:57783"/>
    </ligand>
</feature>
<feature type="binding site" evidence="1">
    <location>
        <position position="30"/>
    </location>
    <ligand>
        <name>NADPH</name>
        <dbReference type="ChEBI" id="CHEBI:57783"/>
    </ligand>
</feature>
<feature type="binding site" evidence="1">
    <location>
        <position position="108"/>
    </location>
    <ligand>
        <name>NADPH</name>
        <dbReference type="ChEBI" id="CHEBI:57783"/>
    </ligand>
</feature>
<feature type="binding site" evidence="1">
    <location>
        <position position="108"/>
    </location>
    <ligand>
        <name>sn-glycerol 3-phosphate</name>
        <dbReference type="ChEBI" id="CHEBI:57597"/>
    </ligand>
</feature>
<feature type="binding site" evidence="1">
    <location>
        <position position="137"/>
    </location>
    <ligand>
        <name>sn-glycerol 3-phosphate</name>
        <dbReference type="ChEBI" id="CHEBI:57597"/>
    </ligand>
</feature>
<feature type="binding site" evidence="1">
    <location>
        <position position="139"/>
    </location>
    <ligand>
        <name>sn-glycerol 3-phosphate</name>
        <dbReference type="ChEBI" id="CHEBI:57597"/>
    </ligand>
</feature>
<feature type="binding site" evidence="1">
    <location>
        <position position="141"/>
    </location>
    <ligand>
        <name>NADPH</name>
        <dbReference type="ChEBI" id="CHEBI:57783"/>
    </ligand>
</feature>
<feature type="binding site" evidence="1">
    <location>
        <position position="192"/>
    </location>
    <ligand>
        <name>sn-glycerol 3-phosphate</name>
        <dbReference type="ChEBI" id="CHEBI:57597"/>
    </ligand>
</feature>
<feature type="binding site" evidence="1">
    <location>
        <position position="245"/>
    </location>
    <ligand>
        <name>sn-glycerol 3-phosphate</name>
        <dbReference type="ChEBI" id="CHEBI:57597"/>
    </ligand>
</feature>
<feature type="binding site" evidence="1">
    <location>
        <position position="255"/>
    </location>
    <ligand>
        <name>sn-glycerol 3-phosphate</name>
        <dbReference type="ChEBI" id="CHEBI:57597"/>
    </ligand>
</feature>
<feature type="binding site" evidence="1">
    <location>
        <position position="256"/>
    </location>
    <ligand>
        <name>NADPH</name>
        <dbReference type="ChEBI" id="CHEBI:57783"/>
    </ligand>
</feature>
<feature type="binding site" evidence="1">
    <location>
        <position position="256"/>
    </location>
    <ligand>
        <name>sn-glycerol 3-phosphate</name>
        <dbReference type="ChEBI" id="CHEBI:57597"/>
    </ligand>
</feature>
<feature type="binding site" evidence="1">
    <location>
        <position position="257"/>
    </location>
    <ligand>
        <name>sn-glycerol 3-phosphate</name>
        <dbReference type="ChEBI" id="CHEBI:57597"/>
    </ligand>
</feature>
<feature type="binding site" evidence="1">
    <location>
        <position position="280"/>
    </location>
    <ligand>
        <name>NADPH</name>
        <dbReference type="ChEBI" id="CHEBI:57783"/>
    </ligand>
</feature>
<feature type="binding site" evidence="1">
    <location>
        <position position="282"/>
    </location>
    <ligand>
        <name>NADPH</name>
        <dbReference type="ChEBI" id="CHEBI:57783"/>
    </ligand>
</feature>
<keyword id="KW-0963">Cytoplasm</keyword>
<keyword id="KW-0444">Lipid biosynthesis</keyword>
<keyword id="KW-0443">Lipid metabolism</keyword>
<keyword id="KW-0520">NAD</keyword>
<keyword id="KW-0521">NADP</keyword>
<keyword id="KW-0547">Nucleotide-binding</keyword>
<keyword id="KW-0560">Oxidoreductase</keyword>
<keyword id="KW-0594">Phospholipid biosynthesis</keyword>
<keyword id="KW-1208">Phospholipid metabolism</keyword>
<keyword id="KW-1185">Reference proteome</keyword>
<protein>
    <recommendedName>
        <fullName evidence="1">Glycerol-3-phosphate dehydrogenase [NAD(P)+]</fullName>
        <ecNumber evidence="1">1.1.1.94</ecNumber>
    </recommendedName>
    <alternativeName>
        <fullName evidence="1">NAD(P)(+)-dependent glycerol-3-phosphate dehydrogenase</fullName>
    </alternativeName>
    <alternativeName>
        <fullName evidence="1">NAD(P)H-dependent dihydroxyacetone-phosphate reductase</fullName>
    </alternativeName>
</protein>
<evidence type="ECO:0000255" key="1">
    <source>
        <dbReference type="HAMAP-Rule" id="MF_00394"/>
    </source>
</evidence>
<proteinExistence type="inferred from homology"/>
<organism>
    <name type="scientific">Burkholderia multivorans (strain ATCC 17616 / 249)</name>
    <dbReference type="NCBI Taxonomy" id="395019"/>
    <lineage>
        <taxon>Bacteria</taxon>
        <taxon>Pseudomonadati</taxon>
        <taxon>Pseudomonadota</taxon>
        <taxon>Betaproteobacteria</taxon>
        <taxon>Burkholderiales</taxon>
        <taxon>Burkholderiaceae</taxon>
        <taxon>Burkholderia</taxon>
        <taxon>Burkholderia cepacia complex</taxon>
    </lineage>
</organism>
<dbReference type="EC" id="1.1.1.94" evidence="1"/>
<dbReference type="EMBL" id="CP000868">
    <property type="protein sequence ID" value="ABX14145.1"/>
    <property type="molecule type" value="Genomic_DNA"/>
</dbReference>
<dbReference type="EMBL" id="AP009385">
    <property type="protein sequence ID" value="BAG44693.1"/>
    <property type="molecule type" value="Genomic_DNA"/>
</dbReference>
<dbReference type="RefSeq" id="WP_012212658.1">
    <property type="nucleotide sequence ID" value="NC_010084.1"/>
</dbReference>
<dbReference type="SMR" id="A9AEK1"/>
<dbReference type="STRING" id="395019.BMULJ_02805"/>
<dbReference type="KEGG" id="bmj:BMULJ_02805"/>
<dbReference type="KEGG" id="bmu:Bmul_0450"/>
<dbReference type="eggNOG" id="COG0240">
    <property type="taxonomic scope" value="Bacteria"/>
</dbReference>
<dbReference type="HOGENOM" id="CLU_033449_0_2_4"/>
<dbReference type="UniPathway" id="UPA00940"/>
<dbReference type="Proteomes" id="UP000008815">
    <property type="component" value="Chromosome 1"/>
</dbReference>
<dbReference type="GO" id="GO:0005829">
    <property type="term" value="C:cytosol"/>
    <property type="evidence" value="ECO:0007669"/>
    <property type="project" value="TreeGrafter"/>
</dbReference>
<dbReference type="GO" id="GO:0047952">
    <property type="term" value="F:glycerol-3-phosphate dehydrogenase [NAD(P)+] activity"/>
    <property type="evidence" value="ECO:0007669"/>
    <property type="project" value="UniProtKB-UniRule"/>
</dbReference>
<dbReference type="GO" id="GO:0051287">
    <property type="term" value="F:NAD binding"/>
    <property type="evidence" value="ECO:0007669"/>
    <property type="project" value="InterPro"/>
</dbReference>
<dbReference type="GO" id="GO:0005975">
    <property type="term" value="P:carbohydrate metabolic process"/>
    <property type="evidence" value="ECO:0007669"/>
    <property type="project" value="InterPro"/>
</dbReference>
<dbReference type="GO" id="GO:0046167">
    <property type="term" value="P:glycerol-3-phosphate biosynthetic process"/>
    <property type="evidence" value="ECO:0007669"/>
    <property type="project" value="UniProtKB-UniRule"/>
</dbReference>
<dbReference type="GO" id="GO:0046168">
    <property type="term" value="P:glycerol-3-phosphate catabolic process"/>
    <property type="evidence" value="ECO:0007669"/>
    <property type="project" value="InterPro"/>
</dbReference>
<dbReference type="GO" id="GO:0006650">
    <property type="term" value="P:glycerophospholipid metabolic process"/>
    <property type="evidence" value="ECO:0007669"/>
    <property type="project" value="UniProtKB-UniRule"/>
</dbReference>
<dbReference type="GO" id="GO:0008654">
    <property type="term" value="P:phospholipid biosynthetic process"/>
    <property type="evidence" value="ECO:0007669"/>
    <property type="project" value="UniProtKB-KW"/>
</dbReference>
<dbReference type="FunFam" id="1.10.1040.10:FF:000001">
    <property type="entry name" value="Glycerol-3-phosphate dehydrogenase [NAD(P)+]"/>
    <property type="match status" value="1"/>
</dbReference>
<dbReference type="FunFam" id="3.40.50.720:FF:000019">
    <property type="entry name" value="Glycerol-3-phosphate dehydrogenase [NAD(P)+]"/>
    <property type="match status" value="1"/>
</dbReference>
<dbReference type="Gene3D" id="1.10.1040.10">
    <property type="entry name" value="N-(1-d-carboxylethyl)-l-norvaline Dehydrogenase, domain 2"/>
    <property type="match status" value="1"/>
</dbReference>
<dbReference type="Gene3D" id="3.40.50.720">
    <property type="entry name" value="NAD(P)-binding Rossmann-like Domain"/>
    <property type="match status" value="1"/>
</dbReference>
<dbReference type="HAMAP" id="MF_00394">
    <property type="entry name" value="NAD_Glyc3P_dehydrog"/>
    <property type="match status" value="1"/>
</dbReference>
<dbReference type="InterPro" id="IPR008927">
    <property type="entry name" value="6-PGluconate_DH-like_C_sf"/>
</dbReference>
<dbReference type="InterPro" id="IPR013328">
    <property type="entry name" value="6PGD_dom2"/>
</dbReference>
<dbReference type="InterPro" id="IPR006168">
    <property type="entry name" value="G3P_DH_NAD-dep"/>
</dbReference>
<dbReference type="InterPro" id="IPR006109">
    <property type="entry name" value="G3P_DH_NAD-dep_C"/>
</dbReference>
<dbReference type="InterPro" id="IPR011128">
    <property type="entry name" value="G3P_DH_NAD-dep_N"/>
</dbReference>
<dbReference type="InterPro" id="IPR036291">
    <property type="entry name" value="NAD(P)-bd_dom_sf"/>
</dbReference>
<dbReference type="NCBIfam" id="NF000940">
    <property type="entry name" value="PRK00094.1-2"/>
    <property type="match status" value="1"/>
</dbReference>
<dbReference type="NCBIfam" id="NF000942">
    <property type="entry name" value="PRK00094.1-4"/>
    <property type="match status" value="1"/>
</dbReference>
<dbReference type="PANTHER" id="PTHR11728">
    <property type="entry name" value="GLYCEROL-3-PHOSPHATE DEHYDROGENASE"/>
    <property type="match status" value="1"/>
</dbReference>
<dbReference type="PANTHER" id="PTHR11728:SF1">
    <property type="entry name" value="GLYCEROL-3-PHOSPHATE DEHYDROGENASE [NAD(+)] 2, CHLOROPLASTIC"/>
    <property type="match status" value="1"/>
</dbReference>
<dbReference type="Pfam" id="PF07479">
    <property type="entry name" value="NAD_Gly3P_dh_C"/>
    <property type="match status" value="1"/>
</dbReference>
<dbReference type="Pfam" id="PF01210">
    <property type="entry name" value="NAD_Gly3P_dh_N"/>
    <property type="match status" value="1"/>
</dbReference>
<dbReference type="PIRSF" id="PIRSF000114">
    <property type="entry name" value="Glycerol-3-P_dh"/>
    <property type="match status" value="1"/>
</dbReference>
<dbReference type="PRINTS" id="PR00077">
    <property type="entry name" value="GPDHDRGNASE"/>
</dbReference>
<dbReference type="SUPFAM" id="SSF48179">
    <property type="entry name" value="6-phosphogluconate dehydrogenase C-terminal domain-like"/>
    <property type="match status" value="1"/>
</dbReference>
<dbReference type="SUPFAM" id="SSF51735">
    <property type="entry name" value="NAD(P)-binding Rossmann-fold domains"/>
    <property type="match status" value="1"/>
</dbReference>
<dbReference type="PROSITE" id="PS00957">
    <property type="entry name" value="NAD_G3PDH"/>
    <property type="match status" value="1"/>
</dbReference>
<accession>A9AEK1</accession>
<reference key="1">
    <citation type="submission" date="2007-10" db="EMBL/GenBank/DDBJ databases">
        <title>Complete sequence of chromosome 1 of Burkholderia multivorans ATCC 17616.</title>
        <authorList>
            <person name="Copeland A."/>
            <person name="Lucas S."/>
            <person name="Lapidus A."/>
            <person name="Barry K."/>
            <person name="Glavina del Rio T."/>
            <person name="Dalin E."/>
            <person name="Tice H."/>
            <person name="Pitluck S."/>
            <person name="Chain P."/>
            <person name="Malfatti S."/>
            <person name="Shin M."/>
            <person name="Vergez L."/>
            <person name="Schmutz J."/>
            <person name="Larimer F."/>
            <person name="Land M."/>
            <person name="Hauser L."/>
            <person name="Kyrpides N."/>
            <person name="Kim E."/>
            <person name="Tiedje J."/>
            <person name="Richardson P."/>
        </authorList>
    </citation>
    <scope>NUCLEOTIDE SEQUENCE [LARGE SCALE GENOMIC DNA]</scope>
    <source>
        <strain>ATCC 17616 / 249</strain>
    </source>
</reference>
<reference key="2">
    <citation type="submission" date="2007-04" db="EMBL/GenBank/DDBJ databases">
        <title>Complete genome sequence of Burkholderia multivorans ATCC 17616.</title>
        <authorList>
            <person name="Ohtsubo Y."/>
            <person name="Yamashita A."/>
            <person name="Kurokawa K."/>
            <person name="Takami H."/>
            <person name="Yuhara S."/>
            <person name="Nishiyama E."/>
            <person name="Endo R."/>
            <person name="Miyazaki R."/>
            <person name="Ono A."/>
            <person name="Yano K."/>
            <person name="Ito M."/>
            <person name="Sota M."/>
            <person name="Yuji N."/>
            <person name="Hattori M."/>
            <person name="Tsuda M."/>
        </authorList>
    </citation>
    <scope>NUCLEOTIDE SEQUENCE [LARGE SCALE GENOMIC DNA]</scope>
    <source>
        <strain>ATCC 17616 / 249</strain>
    </source>
</reference>
<comment type="function">
    <text evidence="1">Catalyzes the reduction of the glycolytic intermediate dihydroxyacetone phosphate (DHAP) to sn-glycerol 3-phosphate (G3P), the key precursor for phospholipid synthesis.</text>
</comment>
<comment type="catalytic activity">
    <reaction evidence="1">
        <text>sn-glycerol 3-phosphate + NAD(+) = dihydroxyacetone phosphate + NADH + H(+)</text>
        <dbReference type="Rhea" id="RHEA:11092"/>
        <dbReference type="ChEBI" id="CHEBI:15378"/>
        <dbReference type="ChEBI" id="CHEBI:57540"/>
        <dbReference type="ChEBI" id="CHEBI:57597"/>
        <dbReference type="ChEBI" id="CHEBI:57642"/>
        <dbReference type="ChEBI" id="CHEBI:57945"/>
        <dbReference type="EC" id="1.1.1.94"/>
    </reaction>
    <physiologicalReaction direction="right-to-left" evidence="1">
        <dbReference type="Rhea" id="RHEA:11094"/>
    </physiologicalReaction>
</comment>
<comment type="catalytic activity">
    <reaction evidence="1">
        <text>sn-glycerol 3-phosphate + NADP(+) = dihydroxyacetone phosphate + NADPH + H(+)</text>
        <dbReference type="Rhea" id="RHEA:11096"/>
        <dbReference type="ChEBI" id="CHEBI:15378"/>
        <dbReference type="ChEBI" id="CHEBI:57597"/>
        <dbReference type="ChEBI" id="CHEBI:57642"/>
        <dbReference type="ChEBI" id="CHEBI:57783"/>
        <dbReference type="ChEBI" id="CHEBI:58349"/>
        <dbReference type="EC" id="1.1.1.94"/>
    </reaction>
    <physiologicalReaction direction="right-to-left" evidence="1">
        <dbReference type="Rhea" id="RHEA:11098"/>
    </physiologicalReaction>
</comment>
<comment type="pathway">
    <text evidence="1">Membrane lipid metabolism; glycerophospholipid metabolism.</text>
</comment>
<comment type="subcellular location">
    <subcellularLocation>
        <location evidence="1">Cytoplasm</location>
    </subcellularLocation>
</comment>
<comment type="similarity">
    <text evidence="1">Belongs to the NAD-dependent glycerol-3-phosphate dehydrogenase family.</text>
</comment>